<name>HGLS_MYCBO</name>
<gene>
    <name type="ordered locus">BQ2027_MB3320</name>
</gene>
<comment type="function">
    <text evidence="1">Catalyzes the decarboxylation and hydroxylation of 2-oxoadipate (2OA) to form D-2-hydroxyglutarate (D-2-HGA).</text>
</comment>
<comment type="catalytic activity">
    <reaction evidence="1">
        <text>2-oxoadipate + O2 = (R)-2-hydroxyglutarate + CO2</text>
        <dbReference type="Rhea" id="RHEA:71787"/>
        <dbReference type="ChEBI" id="CHEBI:15379"/>
        <dbReference type="ChEBI" id="CHEBI:15801"/>
        <dbReference type="ChEBI" id="CHEBI:16526"/>
        <dbReference type="ChEBI" id="CHEBI:57499"/>
        <dbReference type="EC" id="1.13.11.93"/>
    </reaction>
</comment>
<comment type="cofactor">
    <cofactor evidence="1">
        <name>Fe(2+)</name>
        <dbReference type="ChEBI" id="CHEBI:29033"/>
    </cofactor>
</comment>
<comment type="similarity">
    <text evidence="2">Belongs to the 2-oxoadipate dioxygenase/decarboxylase family.</text>
</comment>
<reference key="1">
    <citation type="journal article" date="2003" name="Proc. Natl. Acad. Sci. U.S.A.">
        <title>The complete genome sequence of Mycobacterium bovis.</title>
        <authorList>
            <person name="Garnier T."/>
            <person name="Eiglmeier K."/>
            <person name="Camus J.-C."/>
            <person name="Medina N."/>
            <person name="Mansoor H."/>
            <person name="Pryor M."/>
            <person name="Duthoy S."/>
            <person name="Grondin S."/>
            <person name="Lacroix C."/>
            <person name="Monsempe C."/>
            <person name="Simon S."/>
            <person name="Harris B."/>
            <person name="Atkin R."/>
            <person name="Doggett J."/>
            <person name="Mayes R."/>
            <person name="Keating L."/>
            <person name="Wheeler P.R."/>
            <person name="Parkhill J."/>
            <person name="Barrell B.G."/>
            <person name="Cole S.T."/>
            <person name="Gordon S.V."/>
            <person name="Hewinson R.G."/>
        </authorList>
    </citation>
    <scope>NUCLEOTIDE SEQUENCE [LARGE SCALE GENOMIC DNA]</scope>
    <source>
        <strain>ATCC BAA-935 / AF2122/97</strain>
    </source>
</reference>
<reference key="2">
    <citation type="journal article" date="2017" name="Genome Announc.">
        <title>Updated reference genome sequence and annotation of Mycobacterium bovis AF2122/97.</title>
        <authorList>
            <person name="Malone K.M."/>
            <person name="Farrell D."/>
            <person name="Stuber T.P."/>
            <person name="Schubert O.T."/>
            <person name="Aebersold R."/>
            <person name="Robbe-Austerman S."/>
            <person name="Gordon S.V."/>
        </authorList>
    </citation>
    <scope>NUCLEOTIDE SEQUENCE [LARGE SCALE GENOMIC DNA]</scope>
    <scope>GENOME REANNOTATION</scope>
    <source>
        <strain>ATCC BAA-935 / AF2122/97</strain>
    </source>
</reference>
<protein>
    <recommendedName>
        <fullName evidence="1">2-oxoadipate dioxygenase/decarboxylase</fullName>
        <ecNumber evidence="1">1.13.11.93</ecNumber>
    </recommendedName>
    <alternativeName>
        <fullName evidence="1">2-hydroxyglutarate synthase</fullName>
    </alternativeName>
</protein>
<accession>P65066</accession>
<accession>A0A1R3Y3Q5</accession>
<accession>P96897</accession>
<accession>X2BMS0</accession>
<feature type="chain" id="PRO_0000104115" description="2-oxoadipate dioxygenase/decarboxylase">
    <location>
        <begin position="1"/>
        <end position="415"/>
    </location>
</feature>
<feature type="binding site" evidence="1">
    <location>
        <position position="66"/>
    </location>
    <ligand>
        <name>2-oxoadipate</name>
        <dbReference type="ChEBI" id="CHEBI:57499"/>
    </ligand>
</feature>
<feature type="binding site" evidence="1">
    <location>
        <position position="66"/>
    </location>
    <ligand>
        <name>Fe(2+)</name>
        <dbReference type="ChEBI" id="CHEBI:29033"/>
    </ligand>
</feature>
<feature type="binding site" evidence="1">
    <location>
        <position position="70"/>
    </location>
    <ligand>
        <name>2-oxoadipate</name>
        <dbReference type="ChEBI" id="CHEBI:57499"/>
    </ligand>
</feature>
<feature type="binding site" evidence="1">
    <location>
        <position position="225"/>
    </location>
    <ligand>
        <name>2-oxoadipate</name>
        <dbReference type="ChEBI" id="CHEBI:57499"/>
    </ligand>
</feature>
<feature type="binding site" evidence="1">
    <location>
        <position position="225"/>
    </location>
    <ligand>
        <name>Fe(2+)</name>
        <dbReference type="ChEBI" id="CHEBI:29033"/>
    </ligand>
</feature>
<feature type="binding site" evidence="1">
    <location>
        <position position="296"/>
    </location>
    <ligand>
        <name>Fe(2+)</name>
        <dbReference type="ChEBI" id="CHEBI:29033"/>
    </ligand>
</feature>
<feature type="binding site" evidence="1">
    <location>
        <position position="361"/>
    </location>
    <ligand>
        <name>2-oxoadipate</name>
        <dbReference type="ChEBI" id="CHEBI:57499"/>
    </ligand>
</feature>
<feature type="site" description="Important for substrate specificity" evidence="1">
    <location>
        <position position="70"/>
    </location>
</feature>
<dbReference type="EC" id="1.13.11.93" evidence="1"/>
<dbReference type="EMBL" id="LT708304">
    <property type="protein sequence ID" value="SIU01949.1"/>
    <property type="molecule type" value="Genomic_DNA"/>
</dbReference>
<dbReference type="RefSeq" id="NP_856965.1">
    <property type="nucleotide sequence ID" value="NC_002945.3"/>
</dbReference>
<dbReference type="RefSeq" id="WP_003417184.1">
    <property type="nucleotide sequence ID" value="NC_002945.4"/>
</dbReference>
<dbReference type="SMR" id="P65066"/>
<dbReference type="KEGG" id="mbo:BQ2027_MB3320"/>
<dbReference type="PATRIC" id="fig|233413.5.peg.3649"/>
<dbReference type="Proteomes" id="UP000001419">
    <property type="component" value="Chromosome"/>
</dbReference>
<dbReference type="GO" id="GO:0051213">
    <property type="term" value="F:dioxygenase activity"/>
    <property type="evidence" value="ECO:0007669"/>
    <property type="project" value="UniProtKB-KW"/>
</dbReference>
<dbReference type="GO" id="GO:0046872">
    <property type="term" value="F:metal ion binding"/>
    <property type="evidence" value="ECO:0007669"/>
    <property type="project" value="UniProtKB-KW"/>
</dbReference>
<dbReference type="CDD" id="cd16348">
    <property type="entry name" value="VOC_YdcJ_like"/>
    <property type="match status" value="1"/>
</dbReference>
<dbReference type="Gene3D" id="3.10.180.80">
    <property type="entry name" value="Uncharacterised protein PF07063, DUF1338"/>
    <property type="match status" value="1"/>
</dbReference>
<dbReference type="InterPro" id="IPR009770">
    <property type="entry name" value="HGLS"/>
</dbReference>
<dbReference type="InterPro" id="IPR047869">
    <property type="entry name" value="YdcJ_bac-like"/>
</dbReference>
<dbReference type="PANTHER" id="PTHR39479">
    <property type="match status" value="1"/>
</dbReference>
<dbReference type="PANTHER" id="PTHR39479:SF2">
    <property type="entry name" value="2-OXOADIPATE DIOXYGENASE_DECARBOXYLASE"/>
    <property type="match status" value="1"/>
</dbReference>
<dbReference type="Pfam" id="PF07063">
    <property type="entry name" value="HGLS"/>
    <property type="match status" value="1"/>
</dbReference>
<dbReference type="SMART" id="SM01150">
    <property type="entry name" value="DUF1338"/>
    <property type="match status" value="1"/>
</dbReference>
<organism>
    <name type="scientific">Mycobacterium bovis (strain ATCC BAA-935 / AF2122/97)</name>
    <dbReference type="NCBI Taxonomy" id="233413"/>
    <lineage>
        <taxon>Bacteria</taxon>
        <taxon>Bacillati</taxon>
        <taxon>Actinomycetota</taxon>
        <taxon>Actinomycetes</taxon>
        <taxon>Mycobacteriales</taxon>
        <taxon>Mycobacteriaceae</taxon>
        <taxon>Mycobacterium</taxon>
        <taxon>Mycobacterium tuberculosis complex</taxon>
    </lineage>
</organism>
<proteinExistence type="inferred from homology"/>
<sequence length="415" mass="45332">MSRSKRLQTGQLRARFAAGLSAMYAAEVPAYGTLVEVCAQVNSDYLTRHRRAERLGSLQRVTAERHGAIRVGNPAELAAVADLFAAFGMLPVGYYDLRTAESPIPVVSTAFRPIDANELAHNPFRVFTSMLAIEDRRYFDADLRTRVQTFLARRQLFDPALLAQARAIAADGGCDADDAPAFVAAAVAAFALSREPVEKSWYDELSRVSAVAADIAGVGSTHINHLTPRVLDIDDLYRRMTERGITMIDTIQGPPRTDGPDVLLRQTSFRALAEPRMFRDEDGTVTPGILRVRFGEVEARGVALTPRGRERYEAAMAAADPAAVWATHFPSTDAEMAAQGLAYYRGGDPSAPIVYEDFLPASAAGIFRSNLDRDSQTGDGPDDAGYNVDWLAGAIGRHIHDPYALYDALAQEERR</sequence>
<keyword id="KW-0223">Dioxygenase</keyword>
<keyword id="KW-0408">Iron</keyword>
<keyword id="KW-0479">Metal-binding</keyword>
<keyword id="KW-0560">Oxidoreductase</keyword>
<keyword id="KW-1185">Reference proteome</keyword>
<evidence type="ECO:0000250" key="1">
    <source>
        <dbReference type="UniProtKB" id="Q88CC1"/>
    </source>
</evidence>
<evidence type="ECO:0000305" key="2"/>